<sequence>MKAWASTGRGLRINNVWCQQRLLHPLPSRDDTHAIAFSSSPGKSDPEQEGVTGPNKKHSDLATIKQPTSGIRRQDASSSSCFAGRGSSGLEGCRDRRRPLRSYTNISLELAVGGPLTMVPQICHPVKARQPLVVHEWNIFRSIPSTFILTEEGPPRCHRFLGTELSYSSHPEIPIRIPRCRIRDAPLPHSPRITLHGHRNSGVPQRSAARSPAGTNGFIIPPWNHYMYEPECRLTRLCGQAPHSRVPPCGACAPNTTRSTRGVAGHIAKGLSRIVEPPLWIVILPPKRILPLPKGEPSIHYARCVNHFMIASKAATSAEKWKHHHPRFRRYHPSARARSGFMDQSFEDCSASLCYVSGTRPEIRKVRARMVGDPLLTGTPSEELLAATPTTHSIGLSAEDKYRSTAGRPTSRSARTILPRDDDVSNRSYRISASIHYCGECSKERNGLYRMQHIPRSSCAKTPARKHGGTIRVARDEYGPGVFRAPPPTPAEGRALLLIGVRRQGRTNWYSDMTRVDCVANHLRRERAPHTRCR</sequence>
<organism>
    <name type="scientific">Selaginella uncinata</name>
    <name type="common">Blue spike-moss</name>
    <name type="synonym">Lycopodium uncinatum</name>
    <dbReference type="NCBI Taxonomy" id="307165"/>
    <lineage>
        <taxon>Eukaryota</taxon>
        <taxon>Viridiplantae</taxon>
        <taxon>Streptophyta</taxon>
        <taxon>Embryophyta</taxon>
        <taxon>Tracheophyta</taxon>
        <taxon>Lycopodiopsida</taxon>
        <taxon>Selaginellales</taxon>
        <taxon>Selaginellaceae</taxon>
        <taxon>Selaginella</taxon>
    </lineage>
</organism>
<comment type="function">
    <text evidence="1">Usually encoded in the trnK tRNA gene intron. Probably assists in splicing its own and other chloroplast group II introns (By similarity).</text>
</comment>
<comment type="subcellular location">
    <subcellularLocation>
        <location>Plastid</location>
        <location>Chloroplast</location>
    </subcellularLocation>
</comment>
<comment type="similarity">
    <text evidence="3">Belongs to the intron maturase 2 family. MatK subfamily.</text>
</comment>
<feature type="chain" id="PRO_0000363783" description="Probable maturase K">
    <location>
        <begin position="1"/>
        <end position="534"/>
    </location>
</feature>
<feature type="region of interest" description="Disordered" evidence="2">
    <location>
        <begin position="29"/>
        <end position="95"/>
    </location>
</feature>
<name>MATK_SELUN</name>
<gene>
    <name type="primary">matK</name>
</gene>
<keyword id="KW-0150">Chloroplast</keyword>
<keyword id="KW-0507">mRNA processing</keyword>
<keyword id="KW-0934">Plastid</keyword>
<keyword id="KW-0694">RNA-binding</keyword>
<keyword id="KW-0819">tRNA processing</keyword>
<protein>
    <recommendedName>
        <fullName>Probable maturase K</fullName>
    </recommendedName>
    <alternativeName>
        <fullName>Intron maturase</fullName>
    </alternativeName>
</protein>
<accession>Q2WGI1</accession>
<proteinExistence type="inferred from homology"/>
<dbReference type="EMBL" id="AB197035">
    <property type="protein sequence ID" value="BAE00195.1"/>
    <property type="molecule type" value="Genomic_DNA"/>
</dbReference>
<dbReference type="GO" id="GO:0009507">
    <property type="term" value="C:chloroplast"/>
    <property type="evidence" value="ECO:0007669"/>
    <property type="project" value="UniProtKB-SubCell"/>
</dbReference>
<dbReference type="GO" id="GO:0003723">
    <property type="term" value="F:RNA binding"/>
    <property type="evidence" value="ECO:0007669"/>
    <property type="project" value="UniProtKB-KW"/>
</dbReference>
<dbReference type="GO" id="GO:0006397">
    <property type="term" value="P:mRNA processing"/>
    <property type="evidence" value="ECO:0007669"/>
    <property type="project" value="UniProtKB-KW"/>
</dbReference>
<dbReference type="GO" id="GO:0008033">
    <property type="term" value="P:tRNA processing"/>
    <property type="evidence" value="ECO:0007669"/>
    <property type="project" value="UniProtKB-KW"/>
</dbReference>
<dbReference type="InterPro" id="IPR002866">
    <property type="entry name" value="Maturase_MatK"/>
</dbReference>
<dbReference type="InterPro" id="IPR024942">
    <property type="entry name" value="Maturase_MatK_N"/>
</dbReference>
<dbReference type="PANTHER" id="PTHR34811">
    <property type="entry name" value="MATURASE K"/>
    <property type="match status" value="1"/>
</dbReference>
<dbReference type="PANTHER" id="PTHR34811:SF1">
    <property type="entry name" value="MATURASE K"/>
    <property type="match status" value="1"/>
</dbReference>
<dbReference type="Pfam" id="PF01824">
    <property type="entry name" value="MatK_N"/>
    <property type="match status" value="1"/>
</dbReference>
<reference key="1">
    <citation type="journal article" date="2007" name="J. Plant Res.">
        <title>The chloroplast genome from a lycophyte (microphyllophyte), Selaginella uncinata, has a unique inversion, transpositions and many gene losses.</title>
        <authorList>
            <person name="Tsuji S."/>
            <person name="Ueda K."/>
            <person name="Nishiyama T."/>
            <person name="Hasebe M."/>
            <person name="Yoshikawa S."/>
            <person name="Konagaya A."/>
            <person name="Nishiuchi T."/>
            <person name="Yamaguchi K."/>
        </authorList>
    </citation>
    <scope>NUCLEOTIDE SEQUENCE [LARGE SCALE GENOMIC DNA]</scope>
</reference>
<geneLocation type="chloroplast"/>
<evidence type="ECO:0000250" key="1"/>
<evidence type="ECO:0000256" key="2">
    <source>
        <dbReference type="SAM" id="MobiDB-lite"/>
    </source>
</evidence>
<evidence type="ECO:0000305" key="3"/>